<name>SYL1_SULTO</name>
<proteinExistence type="inferred from homology"/>
<dbReference type="EC" id="6.1.1.4" evidence="1"/>
<dbReference type="EMBL" id="BA000023">
    <property type="protein sequence ID" value="BAK54356.1"/>
    <property type="molecule type" value="Genomic_DNA"/>
</dbReference>
<dbReference type="RefSeq" id="WP_010978606.1">
    <property type="nucleotide sequence ID" value="NC_003106.2"/>
</dbReference>
<dbReference type="SMR" id="Q974N4"/>
<dbReference type="STRING" id="273063.STK_06250"/>
<dbReference type="GeneID" id="1458573"/>
<dbReference type="KEGG" id="sto:STK_06250"/>
<dbReference type="PATRIC" id="fig|273063.9.peg.709"/>
<dbReference type="eggNOG" id="arCOG00809">
    <property type="taxonomic scope" value="Archaea"/>
</dbReference>
<dbReference type="OrthoDB" id="23906at2157"/>
<dbReference type="Proteomes" id="UP000001015">
    <property type="component" value="Chromosome"/>
</dbReference>
<dbReference type="GO" id="GO:0005737">
    <property type="term" value="C:cytoplasm"/>
    <property type="evidence" value="ECO:0007669"/>
    <property type="project" value="UniProtKB-SubCell"/>
</dbReference>
<dbReference type="GO" id="GO:0002161">
    <property type="term" value="F:aminoacyl-tRNA deacylase activity"/>
    <property type="evidence" value="ECO:0007669"/>
    <property type="project" value="InterPro"/>
</dbReference>
<dbReference type="GO" id="GO:0005524">
    <property type="term" value="F:ATP binding"/>
    <property type="evidence" value="ECO:0007669"/>
    <property type="project" value="UniProtKB-UniRule"/>
</dbReference>
<dbReference type="GO" id="GO:0004823">
    <property type="term" value="F:leucine-tRNA ligase activity"/>
    <property type="evidence" value="ECO:0007669"/>
    <property type="project" value="UniProtKB-UniRule"/>
</dbReference>
<dbReference type="GO" id="GO:0006429">
    <property type="term" value="P:leucyl-tRNA aminoacylation"/>
    <property type="evidence" value="ECO:0007669"/>
    <property type="project" value="UniProtKB-UniRule"/>
</dbReference>
<dbReference type="CDD" id="cd07959">
    <property type="entry name" value="Anticodon_Ia_Leu_AEc"/>
    <property type="match status" value="1"/>
</dbReference>
<dbReference type="Gene3D" id="3.30.2320.20">
    <property type="entry name" value="Class I aminoacyl-tRNA synthetases (RS)"/>
    <property type="match status" value="1"/>
</dbReference>
<dbReference type="Gene3D" id="3.40.50.620">
    <property type="entry name" value="HUPs"/>
    <property type="match status" value="1"/>
</dbReference>
<dbReference type="Gene3D" id="1.10.730.10">
    <property type="entry name" value="Isoleucyl-tRNA Synthetase, Domain 1"/>
    <property type="match status" value="1"/>
</dbReference>
<dbReference type="Gene3D" id="1.10.10.720">
    <property type="entry name" value="leucyl-tRNA synthetase"/>
    <property type="match status" value="1"/>
</dbReference>
<dbReference type="Gene3D" id="3.90.740.10">
    <property type="entry name" value="Valyl/Leucyl/Isoleucyl-tRNA synthetase, editing domain"/>
    <property type="match status" value="1"/>
</dbReference>
<dbReference type="HAMAP" id="MF_00049_A">
    <property type="entry name" value="Leu_tRNA_synth_A"/>
    <property type="match status" value="1"/>
</dbReference>
<dbReference type="InterPro" id="IPR002300">
    <property type="entry name" value="aa-tRNA-synth_Ia"/>
</dbReference>
<dbReference type="InterPro" id="IPR020791">
    <property type="entry name" value="Leu-tRNA-lgase_arc"/>
</dbReference>
<dbReference type="InterPro" id="IPR004493">
    <property type="entry name" value="Leu-tRNA-synth_Ia_arc/euk"/>
</dbReference>
<dbReference type="InterPro" id="IPR013155">
    <property type="entry name" value="M/V/L/I-tRNA-synth_anticd-bd"/>
</dbReference>
<dbReference type="InterPro" id="IPR014729">
    <property type="entry name" value="Rossmann-like_a/b/a_fold"/>
</dbReference>
<dbReference type="InterPro" id="IPR009080">
    <property type="entry name" value="tRNAsynth_Ia_anticodon-bd"/>
</dbReference>
<dbReference type="InterPro" id="IPR009008">
    <property type="entry name" value="Val/Leu/Ile-tRNA-synth_edit"/>
</dbReference>
<dbReference type="NCBIfam" id="TIGR00395">
    <property type="entry name" value="leuS_arch"/>
    <property type="match status" value="1"/>
</dbReference>
<dbReference type="NCBIfam" id="NF008957">
    <property type="entry name" value="PRK12300.1"/>
    <property type="match status" value="1"/>
</dbReference>
<dbReference type="PANTHER" id="PTHR45794:SF1">
    <property type="entry name" value="LEUCINE--TRNA LIGASE, CYTOPLASMIC"/>
    <property type="match status" value="1"/>
</dbReference>
<dbReference type="PANTHER" id="PTHR45794">
    <property type="entry name" value="LEUCYL-TRNA SYNTHETASE"/>
    <property type="match status" value="1"/>
</dbReference>
<dbReference type="Pfam" id="PF08264">
    <property type="entry name" value="Anticodon_1"/>
    <property type="match status" value="1"/>
</dbReference>
<dbReference type="Pfam" id="PF00133">
    <property type="entry name" value="tRNA-synt_1"/>
    <property type="match status" value="2"/>
</dbReference>
<dbReference type="SUPFAM" id="SSF47323">
    <property type="entry name" value="Anticodon-binding domain of a subclass of class I aminoacyl-tRNA synthetases"/>
    <property type="match status" value="1"/>
</dbReference>
<dbReference type="SUPFAM" id="SSF52374">
    <property type="entry name" value="Nucleotidylyl transferase"/>
    <property type="match status" value="1"/>
</dbReference>
<dbReference type="SUPFAM" id="SSF50677">
    <property type="entry name" value="ValRS/IleRS/LeuRS editing domain"/>
    <property type="match status" value="1"/>
</dbReference>
<sequence>MSLANFFNEIAFKWQKEWENSKVYEANPETDKPKKFITVAFPYTNSPLHIGHGRTYITADIYARYLRMKGYNVLFPFAFQFTGTPILSISESVKRGDEEIISTFVNIYQIPKEEIEKFSDPTYLAEYFKNNMKNTAKKLGLGIDWRREFTTVDPIFEKFVQWQYRKLMELGYIKREDSPVAYCPRDEFPVGMHDTKGDVEPEITDLDGIYFPSGDYFFIAATPRPETIFGAVALLVNPEADYVIATDSLNRKVIISRQAYDKLKYQISFREEGEKKGKDLVGMIAKNPVTEKEIKVLPSKFVDPSIGTGVVMAVPSHEPLHYIALTELKEEFELIPVIKTDELGELPGVEAVGLAQTRNPAELKDYIDTIYRIEYHKGIMREDLVDLVPNFMKEFVKDKIAGKLVKDAREKTRELLDMLNSRITIYEISNGPVYCRCGAEIVVKVIKGQWFIDYSNPIWKTSVLKSLDKINFIPTDSKKEMEKIIFNLQPRAFTRSRGLGVRLPWDEKEIIDSLSDSTIYTAFYTIVHKLKYPISLLSDKFWDYILLDRGTADEISKELGIPKEQLEEIKSEFKYWYPVDSRHSGRDLIQNHLPYYLFHHFAIFGEKFLPRQIVTNGFIRVGGKKMSKSFGNIYPLNRAIDEYGVETVRIALTSTSSISDDIEFNSNIAKSIAEQLKKIHDLISKLLEIEGVNERRDPDVWLLSIFRRYIEDVDKAYENLDLRTVYMTVYYTIYETIKDYIELTNAKINKDIIKKVISIWLRLMAPITPHLAEELWHKMSNTFVVKEKFPSINEVEYNEKSLLKVEYLRSIIEDVNRLSSELGKEAEKVVIYVNDDNNLRELLKKAIIAIKDRKSLRDFMIENNVDDKTARRIYELANVLPSTIRDLIVTTDIDEEEVIVQNINFLMNKLDLREMIVYSSTDEKAPNILGKKDLALPYKPGIAIL</sequence>
<protein>
    <recommendedName>
        <fullName evidence="1">Leucine--tRNA ligase 1</fullName>
        <ecNumber evidence="1">6.1.1.4</ecNumber>
    </recommendedName>
    <alternativeName>
        <fullName evidence="1">Leucyl-tRNA synthetase 1</fullName>
        <shortName evidence="1">LeuRS 1</shortName>
    </alternativeName>
</protein>
<comment type="catalytic activity">
    <reaction evidence="1">
        <text>tRNA(Leu) + L-leucine + ATP = L-leucyl-tRNA(Leu) + AMP + diphosphate</text>
        <dbReference type="Rhea" id="RHEA:11688"/>
        <dbReference type="Rhea" id="RHEA-COMP:9613"/>
        <dbReference type="Rhea" id="RHEA-COMP:9622"/>
        <dbReference type="ChEBI" id="CHEBI:30616"/>
        <dbReference type="ChEBI" id="CHEBI:33019"/>
        <dbReference type="ChEBI" id="CHEBI:57427"/>
        <dbReference type="ChEBI" id="CHEBI:78442"/>
        <dbReference type="ChEBI" id="CHEBI:78494"/>
        <dbReference type="ChEBI" id="CHEBI:456215"/>
        <dbReference type="EC" id="6.1.1.4"/>
    </reaction>
</comment>
<comment type="subcellular location">
    <subcellularLocation>
        <location evidence="1">Cytoplasm</location>
    </subcellularLocation>
</comment>
<comment type="similarity">
    <text evidence="1">Belongs to the class-I aminoacyl-tRNA synthetase family.</text>
</comment>
<evidence type="ECO:0000255" key="1">
    <source>
        <dbReference type="HAMAP-Rule" id="MF_00049"/>
    </source>
</evidence>
<organism>
    <name type="scientific">Sulfurisphaera tokodaii (strain DSM 16993 / JCM 10545 / NBRC 100140 / 7)</name>
    <name type="common">Sulfolobus tokodaii</name>
    <dbReference type="NCBI Taxonomy" id="273063"/>
    <lineage>
        <taxon>Archaea</taxon>
        <taxon>Thermoproteota</taxon>
        <taxon>Thermoprotei</taxon>
        <taxon>Sulfolobales</taxon>
        <taxon>Sulfolobaceae</taxon>
        <taxon>Sulfurisphaera</taxon>
    </lineage>
</organism>
<accession>Q974N4</accession>
<accession>F9VN59</accession>
<feature type="chain" id="PRO_0000152146" description="Leucine--tRNA ligase 1">
    <location>
        <begin position="1"/>
        <end position="945"/>
    </location>
</feature>
<feature type="short sequence motif" description="'HIGH' region">
    <location>
        <begin position="42"/>
        <end position="52"/>
    </location>
</feature>
<feature type="short sequence motif" description="'KMSKS' region">
    <location>
        <begin position="625"/>
        <end position="629"/>
    </location>
</feature>
<feature type="binding site" evidence="1">
    <location>
        <position position="628"/>
    </location>
    <ligand>
        <name>ATP</name>
        <dbReference type="ChEBI" id="CHEBI:30616"/>
    </ligand>
</feature>
<reference key="1">
    <citation type="journal article" date="2001" name="DNA Res.">
        <title>Complete genome sequence of an aerobic thermoacidophilic Crenarchaeon, Sulfolobus tokodaii strain7.</title>
        <authorList>
            <person name="Kawarabayasi Y."/>
            <person name="Hino Y."/>
            <person name="Horikawa H."/>
            <person name="Jin-no K."/>
            <person name="Takahashi M."/>
            <person name="Sekine M."/>
            <person name="Baba S."/>
            <person name="Ankai A."/>
            <person name="Kosugi H."/>
            <person name="Hosoyama A."/>
            <person name="Fukui S."/>
            <person name="Nagai Y."/>
            <person name="Nishijima K."/>
            <person name="Otsuka R."/>
            <person name="Nakazawa H."/>
            <person name="Takamiya M."/>
            <person name="Kato Y."/>
            <person name="Yoshizawa T."/>
            <person name="Tanaka T."/>
            <person name="Kudoh Y."/>
            <person name="Yamazaki J."/>
            <person name="Kushida N."/>
            <person name="Oguchi A."/>
            <person name="Aoki K."/>
            <person name="Masuda S."/>
            <person name="Yanagii M."/>
            <person name="Nishimura M."/>
            <person name="Yamagishi A."/>
            <person name="Oshima T."/>
            <person name="Kikuchi H."/>
        </authorList>
    </citation>
    <scope>NUCLEOTIDE SEQUENCE [LARGE SCALE GENOMIC DNA]</scope>
    <source>
        <strain>DSM 16993 / JCM 10545 / NBRC 100140 / 7</strain>
    </source>
</reference>
<gene>
    <name evidence="1" type="primary">leuS1</name>
    <name type="ordered locus">STK_06250</name>
</gene>
<keyword id="KW-0030">Aminoacyl-tRNA synthetase</keyword>
<keyword id="KW-0067">ATP-binding</keyword>
<keyword id="KW-0963">Cytoplasm</keyword>
<keyword id="KW-0436">Ligase</keyword>
<keyword id="KW-0547">Nucleotide-binding</keyword>
<keyword id="KW-0648">Protein biosynthesis</keyword>
<keyword id="KW-1185">Reference proteome</keyword>